<gene>
    <name evidence="1" type="primary">eno</name>
    <name type="ordered locus">KPN78578_30630</name>
    <name type="ORF">KPN_03123</name>
</gene>
<reference key="1">
    <citation type="submission" date="2006-09" db="EMBL/GenBank/DDBJ databases">
        <authorList>
            <consortium name="The Klebsiella pneumonia Genome Sequencing Project"/>
            <person name="McClelland M."/>
            <person name="Sanderson E.K."/>
            <person name="Spieth J."/>
            <person name="Clifton W.S."/>
            <person name="Latreille P."/>
            <person name="Sabo A."/>
            <person name="Pepin K."/>
            <person name="Bhonagiri V."/>
            <person name="Porwollik S."/>
            <person name="Ali J."/>
            <person name="Wilson R.K."/>
        </authorList>
    </citation>
    <scope>NUCLEOTIDE SEQUENCE [LARGE SCALE GENOMIC DNA]</scope>
    <source>
        <strain>ATCC 700721 / MGH 78578</strain>
    </source>
</reference>
<protein>
    <recommendedName>
        <fullName evidence="1">Enolase</fullName>
        <ecNumber evidence="1">4.2.1.11</ecNumber>
    </recommendedName>
    <alternativeName>
        <fullName evidence="1">2-phospho-D-glycerate hydro-lyase</fullName>
    </alternativeName>
    <alternativeName>
        <fullName evidence="1">2-phosphoglycerate dehydratase</fullName>
    </alternativeName>
</protein>
<dbReference type="EC" id="4.2.1.11" evidence="1"/>
<dbReference type="EMBL" id="CP000647">
    <property type="protein sequence ID" value="ABR78524.1"/>
    <property type="molecule type" value="Genomic_DNA"/>
</dbReference>
<dbReference type="RefSeq" id="WP_002915213.1">
    <property type="nucleotide sequence ID" value="NC_009648.1"/>
</dbReference>
<dbReference type="SMR" id="A6TD53"/>
<dbReference type="STRING" id="272620.KPN_03123"/>
<dbReference type="jPOST" id="A6TD53"/>
<dbReference type="PaxDb" id="272620-KPN_03123"/>
<dbReference type="EnsemblBacteria" id="ABR78524">
    <property type="protein sequence ID" value="ABR78524"/>
    <property type="gene ID" value="KPN_03123"/>
</dbReference>
<dbReference type="GeneID" id="93250418"/>
<dbReference type="KEGG" id="kpn:KPN_03123"/>
<dbReference type="HOGENOM" id="CLU_031223_2_1_6"/>
<dbReference type="UniPathway" id="UPA00109">
    <property type="reaction ID" value="UER00187"/>
</dbReference>
<dbReference type="Proteomes" id="UP000000265">
    <property type="component" value="Chromosome"/>
</dbReference>
<dbReference type="GO" id="GO:0009986">
    <property type="term" value="C:cell surface"/>
    <property type="evidence" value="ECO:0007669"/>
    <property type="project" value="UniProtKB-SubCell"/>
</dbReference>
<dbReference type="GO" id="GO:0005576">
    <property type="term" value="C:extracellular region"/>
    <property type="evidence" value="ECO:0007669"/>
    <property type="project" value="UniProtKB-SubCell"/>
</dbReference>
<dbReference type="GO" id="GO:0000015">
    <property type="term" value="C:phosphopyruvate hydratase complex"/>
    <property type="evidence" value="ECO:0007669"/>
    <property type="project" value="InterPro"/>
</dbReference>
<dbReference type="GO" id="GO:0000287">
    <property type="term" value="F:magnesium ion binding"/>
    <property type="evidence" value="ECO:0007669"/>
    <property type="project" value="UniProtKB-UniRule"/>
</dbReference>
<dbReference type="GO" id="GO:0004634">
    <property type="term" value="F:phosphopyruvate hydratase activity"/>
    <property type="evidence" value="ECO:0007669"/>
    <property type="project" value="UniProtKB-UniRule"/>
</dbReference>
<dbReference type="GO" id="GO:0006096">
    <property type="term" value="P:glycolytic process"/>
    <property type="evidence" value="ECO:0007669"/>
    <property type="project" value="UniProtKB-UniRule"/>
</dbReference>
<dbReference type="CDD" id="cd03313">
    <property type="entry name" value="enolase"/>
    <property type="match status" value="1"/>
</dbReference>
<dbReference type="FunFam" id="3.20.20.120:FF:000001">
    <property type="entry name" value="Enolase"/>
    <property type="match status" value="1"/>
</dbReference>
<dbReference type="FunFam" id="3.30.390.10:FF:000001">
    <property type="entry name" value="Enolase"/>
    <property type="match status" value="1"/>
</dbReference>
<dbReference type="Gene3D" id="3.20.20.120">
    <property type="entry name" value="Enolase-like C-terminal domain"/>
    <property type="match status" value="1"/>
</dbReference>
<dbReference type="Gene3D" id="3.30.390.10">
    <property type="entry name" value="Enolase-like, N-terminal domain"/>
    <property type="match status" value="1"/>
</dbReference>
<dbReference type="HAMAP" id="MF_00318">
    <property type="entry name" value="Enolase"/>
    <property type="match status" value="1"/>
</dbReference>
<dbReference type="InterPro" id="IPR000941">
    <property type="entry name" value="Enolase"/>
</dbReference>
<dbReference type="InterPro" id="IPR036849">
    <property type="entry name" value="Enolase-like_C_sf"/>
</dbReference>
<dbReference type="InterPro" id="IPR029017">
    <property type="entry name" value="Enolase-like_N"/>
</dbReference>
<dbReference type="InterPro" id="IPR020810">
    <property type="entry name" value="Enolase_C"/>
</dbReference>
<dbReference type="InterPro" id="IPR020809">
    <property type="entry name" value="Enolase_CS"/>
</dbReference>
<dbReference type="InterPro" id="IPR020811">
    <property type="entry name" value="Enolase_N"/>
</dbReference>
<dbReference type="NCBIfam" id="TIGR01060">
    <property type="entry name" value="eno"/>
    <property type="match status" value="1"/>
</dbReference>
<dbReference type="PANTHER" id="PTHR11902">
    <property type="entry name" value="ENOLASE"/>
    <property type="match status" value="1"/>
</dbReference>
<dbReference type="PANTHER" id="PTHR11902:SF1">
    <property type="entry name" value="ENOLASE"/>
    <property type="match status" value="1"/>
</dbReference>
<dbReference type="Pfam" id="PF00113">
    <property type="entry name" value="Enolase_C"/>
    <property type="match status" value="1"/>
</dbReference>
<dbReference type="Pfam" id="PF03952">
    <property type="entry name" value="Enolase_N"/>
    <property type="match status" value="1"/>
</dbReference>
<dbReference type="PIRSF" id="PIRSF001400">
    <property type="entry name" value="Enolase"/>
    <property type="match status" value="1"/>
</dbReference>
<dbReference type="PRINTS" id="PR00148">
    <property type="entry name" value="ENOLASE"/>
</dbReference>
<dbReference type="SFLD" id="SFLDS00001">
    <property type="entry name" value="Enolase"/>
    <property type="match status" value="1"/>
</dbReference>
<dbReference type="SFLD" id="SFLDF00002">
    <property type="entry name" value="enolase"/>
    <property type="match status" value="1"/>
</dbReference>
<dbReference type="SMART" id="SM01192">
    <property type="entry name" value="Enolase_C"/>
    <property type="match status" value="1"/>
</dbReference>
<dbReference type="SMART" id="SM01193">
    <property type="entry name" value="Enolase_N"/>
    <property type="match status" value="1"/>
</dbReference>
<dbReference type="SUPFAM" id="SSF51604">
    <property type="entry name" value="Enolase C-terminal domain-like"/>
    <property type="match status" value="1"/>
</dbReference>
<dbReference type="SUPFAM" id="SSF54826">
    <property type="entry name" value="Enolase N-terminal domain-like"/>
    <property type="match status" value="1"/>
</dbReference>
<dbReference type="PROSITE" id="PS00164">
    <property type="entry name" value="ENOLASE"/>
    <property type="match status" value="1"/>
</dbReference>
<name>ENO_KLEP7</name>
<evidence type="ECO:0000255" key="1">
    <source>
        <dbReference type="HAMAP-Rule" id="MF_00318"/>
    </source>
</evidence>
<keyword id="KW-0963">Cytoplasm</keyword>
<keyword id="KW-0324">Glycolysis</keyword>
<keyword id="KW-0456">Lyase</keyword>
<keyword id="KW-0460">Magnesium</keyword>
<keyword id="KW-0479">Metal-binding</keyword>
<keyword id="KW-0964">Secreted</keyword>
<proteinExistence type="inferred from homology"/>
<comment type="function">
    <text evidence="1">Catalyzes the reversible conversion of 2-phosphoglycerate (2-PG) into phosphoenolpyruvate (PEP). It is essential for the degradation of carbohydrates via glycolysis.</text>
</comment>
<comment type="catalytic activity">
    <reaction evidence="1">
        <text>(2R)-2-phosphoglycerate = phosphoenolpyruvate + H2O</text>
        <dbReference type="Rhea" id="RHEA:10164"/>
        <dbReference type="ChEBI" id="CHEBI:15377"/>
        <dbReference type="ChEBI" id="CHEBI:58289"/>
        <dbReference type="ChEBI" id="CHEBI:58702"/>
        <dbReference type="EC" id="4.2.1.11"/>
    </reaction>
</comment>
<comment type="cofactor">
    <cofactor evidence="1">
        <name>Mg(2+)</name>
        <dbReference type="ChEBI" id="CHEBI:18420"/>
    </cofactor>
    <text evidence="1">Binds a second Mg(2+) ion via substrate during catalysis.</text>
</comment>
<comment type="pathway">
    <text evidence="1">Carbohydrate degradation; glycolysis; pyruvate from D-glyceraldehyde 3-phosphate: step 4/5.</text>
</comment>
<comment type="subunit">
    <text evidence="1">Component of the RNA degradosome, a multiprotein complex involved in RNA processing and mRNA degradation.</text>
</comment>
<comment type="subcellular location">
    <subcellularLocation>
        <location evidence="1">Cytoplasm</location>
    </subcellularLocation>
    <subcellularLocation>
        <location evidence="1">Secreted</location>
    </subcellularLocation>
    <subcellularLocation>
        <location evidence="1">Cell surface</location>
    </subcellularLocation>
    <text evidence="1">Fractions of enolase are present in both the cytoplasm and on the cell surface.</text>
</comment>
<comment type="similarity">
    <text evidence="1">Belongs to the enolase family.</text>
</comment>
<accession>A6TD53</accession>
<sequence length="432" mass="45550">MSKIVKVIGREIIDSRGNPTVEAEVHLEGGFVGMAAAPSGASTGSREALELRDGDKSRFLGKGVTKAVAAVNGPIAQAILGKDAKDQAGIDKIMIDLDGTENKSNFGANAILAVSLANAKAAAASKGLPLYAHIAELNGTPGKYSMPVPMMNIINGGEHADNNVDIQEFMIQPVGAPTLKEAVRMGSEVFHHLAKVLKSKGMNTAVGDEGGYAPNLGSNAEALAVIAEAVKAAGYELGKDITLAMDCAASEFYKDGKYVLAGEGNKAFTSEEFTHFLEELTKQYPIVSIEDGLDESDWEGFAYQTKVLGDKIQLVGDDLFVTNTKILKEGIEKGIANSILIKFNQIGSLTETLAAIKMAKDAGYTAVISHRSGETEDATIADLAVGTAAGQIKTGSMSRSDRVAKYNQLIRIEEALGEQAPFNGRKEIKGQA</sequence>
<organism>
    <name type="scientific">Klebsiella pneumoniae subsp. pneumoniae (strain ATCC 700721 / MGH 78578)</name>
    <dbReference type="NCBI Taxonomy" id="272620"/>
    <lineage>
        <taxon>Bacteria</taxon>
        <taxon>Pseudomonadati</taxon>
        <taxon>Pseudomonadota</taxon>
        <taxon>Gammaproteobacteria</taxon>
        <taxon>Enterobacterales</taxon>
        <taxon>Enterobacteriaceae</taxon>
        <taxon>Klebsiella/Raoultella group</taxon>
        <taxon>Klebsiella</taxon>
        <taxon>Klebsiella pneumoniae complex</taxon>
    </lineage>
</organism>
<feature type="chain" id="PRO_1000019215" description="Enolase">
    <location>
        <begin position="1"/>
        <end position="432"/>
    </location>
</feature>
<feature type="active site" description="Proton donor" evidence="1">
    <location>
        <position position="209"/>
    </location>
</feature>
<feature type="active site" description="Proton acceptor" evidence="1">
    <location>
        <position position="342"/>
    </location>
</feature>
<feature type="binding site" evidence="1">
    <location>
        <position position="167"/>
    </location>
    <ligand>
        <name>(2R)-2-phosphoglycerate</name>
        <dbReference type="ChEBI" id="CHEBI:58289"/>
    </ligand>
</feature>
<feature type="binding site" evidence="1">
    <location>
        <position position="246"/>
    </location>
    <ligand>
        <name>Mg(2+)</name>
        <dbReference type="ChEBI" id="CHEBI:18420"/>
    </ligand>
</feature>
<feature type="binding site" evidence="1">
    <location>
        <position position="290"/>
    </location>
    <ligand>
        <name>Mg(2+)</name>
        <dbReference type="ChEBI" id="CHEBI:18420"/>
    </ligand>
</feature>
<feature type="binding site" evidence="1">
    <location>
        <position position="317"/>
    </location>
    <ligand>
        <name>Mg(2+)</name>
        <dbReference type="ChEBI" id="CHEBI:18420"/>
    </ligand>
</feature>
<feature type="binding site" evidence="1">
    <location>
        <position position="342"/>
    </location>
    <ligand>
        <name>(2R)-2-phosphoglycerate</name>
        <dbReference type="ChEBI" id="CHEBI:58289"/>
    </ligand>
</feature>
<feature type="binding site" evidence="1">
    <location>
        <position position="371"/>
    </location>
    <ligand>
        <name>(2R)-2-phosphoglycerate</name>
        <dbReference type="ChEBI" id="CHEBI:58289"/>
    </ligand>
</feature>
<feature type="binding site" evidence="1">
    <location>
        <position position="372"/>
    </location>
    <ligand>
        <name>(2R)-2-phosphoglycerate</name>
        <dbReference type="ChEBI" id="CHEBI:58289"/>
    </ligand>
</feature>
<feature type="binding site" evidence="1">
    <location>
        <position position="393"/>
    </location>
    <ligand>
        <name>(2R)-2-phosphoglycerate</name>
        <dbReference type="ChEBI" id="CHEBI:58289"/>
    </ligand>
</feature>